<feature type="chain" id="PRO_0000065987" description="Chain length determinant protein">
    <location>
        <begin position="1"/>
        <end position="325"/>
    </location>
</feature>
<feature type="topological domain" description="Cytoplasmic" evidence="1">
    <location>
        <begin position="1"/>
        <end position="31"/>
    </location>
</feature>
<feature type="transmembrane region" description="Helical" evidence="1">
    <location>
        <begin position="32"/>
        <end position="52"/>
    </location>
</feature>
<feature type="topological domain" description="Periplasmic" evidence="1">
    <location>
        <begin position="53"/>
        <end position="294"/>
    </location>
</feature>
<feature type="transmembrane region" description="Helical" evidence="1">
    <location>
        <begin position="295"/>
        <end position="315"/>
    </location>
</feature>
<feature type="topological domain" description="Cytoplasmic" evidence="1">
    <location>
        <begin position="316"/>
        <end position="325"/>
    </location>
</feature>
<proteinExistence type="evidence at protein level"/>
<organism>
    <name type="scientific">Escherichia coli</name>
    <dbReference type="NCBI Taxonomy" id="562"/>
    <lineage>
        <taxon>Bacteria</taxon>
        <taxon>Pseudomonadati</taxon>
        <taxon>Pseudomonadota</taxon>
        <taxon>Gammaproteobacteria</taxon>
        <taxon>Enterobacterales</taxon>
        <taxon>Enterobacteriaceae</taxon>
        <taxon>Escherichia</taxon>
    </lineage>
</organism>
<accession>P35272</accession>
<comment type="function">
    <text>Confers a modal distribution of chain length on the O-antigen component of lipopolysaccharide (LPS). Gives rise to a reduced number of short chain molecules and increases in numbers of longer molecules, with a modal value of 13 (in strain O111/M92) and of 17 (in strain K12).</text>
</comment>
<comment type="pathway">
    <text>Bacterial outer membrane biogenesis; lipopolysaccharide biosynthesis.</text>
</comment>
<comment type="subcellular location">
    <subcellularLocation>
        <location>Cell inner membrane</location>
        <topology>Multi-pass membrane protein</topology>
    </subcellularLocation>
</comment>
<comment type="similarity">
    <text evidence="2">Belongs to the WzzB/Cld/Rol family.</text>
</comment>
<sequence length="325" mass="36315">MRVENNNVSGQNHDPEQIDLIDLLVQLWRGKMTIIISVIVAIALAIGYLAVAKEKWTSTAIITQPDVGQIAGYNNAMNVIYGQAAPKVSDLQETLIGRFSSAFSALAETLDNQEEPEKLTIEPSVKNQQLPLTVSYVGQTAEGAQMKLAQYIQQVDDKVNQELEKDLKDNIALGRKNLQDSLRTQEVVAQEQKDLRIRQIQEALQYANQAQVTKPQIQQTQDVTQDTMFLLGSEALESMIKHEATRPLVFSSNYYQTRQNLLDIDNLDVDKLDIHAYRYVMKPTLPIRRDSPKKAITLILAVLLGGMVGAGIVLGRNALRNYNAK</sequence>
<evidence type="ECO:0000255" key="1"/>
<evidence type="ECO:0000305" key="2"/>
<keyword id="KW-0002">3D-structure</keyword>
<keyword id="KW-0997">Cell inner membrane</keyword>
<keyword id="KW-1003">Cell membrane</keyword>
<keyword id="KW-0448">Lipopolysaccharide biosynthesis</keyword>
<keyword id="KW-0472">Membrane</keyword>
<keyword id="KW-0812">Transmembrane</keyword>
<keyword id="KW-1133">Transmembrane helix</keyword>
<reference key="1">
    <citation type="journal article" date="1992" name="J. Bacteriol.">
        <title>Nucleotide sequences of the genes regulating O-polysaccharide antigen chain length (rol) from Escherichia coli and Salmonella typhimurium: protein homology and functional complementation.</title>
        <authorList>
            <person name="Batchelor R.A."/>
            <person name="Alifano P."/>
            <person name="Biffali E."/>
            <person name="Hull S.I."/>
            <person name="Hull R.A."/>
        </authorList>
    </citation>
    <scope>NUCLEOTIDE SEQUENCE [GENOMIC DNA]</scope>
    <source>
        <strain>O75</strain>
    </source>
</reference>
<name>WZZB3_ECOLX</name>
<gene>
    <name type="primary">wzzB</name>
    <name type="synonym">cld</name>
    <name type="synonym">rol</name>
</gene>
<dbReference type="EMBL" id="M89934">
    <property type="status" value="NOT_ANNOTATED_CDS"/>
    <property type="molecule type" value="Genomic_DNA"/>
</dbReference>
<dbReference type="PIR" id="B64968">
    <property type="entry name" value="B64968"/>
</dbReference>
<dbReference type="RefSeq" id="WP_001536169.1">
    <property type="nucleotide sequence ID" value="NZ_WVHY01000002.1"/>
</dbReference>
<dbReference type="PDB" id="5NBZ">
    <property type="method" value="EM"/>
    <property type="resolution" value="9.00 A"/>
    <property type="chains" value="A/B/C/D/E/F/G/H/I/J/K/L=55-291"/>
</dbReference>
<dbReference type="PDBsum" id="5NBZ"/>
<dbReference type="SMR" id="P35272"/>
<dbReference type="PATRIC" id="fig|562.10853.peg.2226"/>
<dbReference type="eggNOG" id="COG3765">
    <property type="taxonomic scope" value="Bacteria"/>
</dbReference>
<dbReference type="UniPathway" id="UPA00030"/>
<dbReference type="GO" id="GO:0005886">
    <property type="term" value="C:plasma membrane"/>
    <property type="evidence" value="ECO:0007669"/>
    <property type="project" value="UniProtKB-SubCell"/>
</dbReference>
<dbReference type="GO" id="GO:0004713">
    <property type="term" value="F:protein tyrosine kinase activity"/>
    <property type="evidence" value="ECO:0007669"/>
    <property type="project" value="TreeGrafter"/>
</dbReference>
<dbReference type="GO" id="GO:0009103">
    <property type="term" value="P:lipopolysaccharide biosynthetic process"/>
    <property type="evidence" value="ECO:0007669"/>
    <property type="project" value="UniProtKB-UniPathway"/>
</dbReference>
<dbReference type="FunFam" id="3.30.1890.10:FF:000002">
    <property type="entry name" value="O-antigen chain length determinant protein"/>
    <property type="match status" value="1"/>
</dbReference>
<dbReference type="Gene3D" id="3.30.1890.10">
    <property type="entry name" value="FepE-like"/>
    <property type="match status" value="1"/>
</dbReference>
<dbReference type="InterPro" id="IPR050445">
    <property type="entry name" value="Bact_polysacc_biosynth/exp"/>
</dbReference>
<dbReference type="InterPro" id="IPR003856">
    <property type="entry name" value="LPS_length_determ_N_term"/>
</dbReference>
<dbReference type="NCBIfam" id="NF012015">
    <property type="entry name" value="PRK15471.1"/>
    <property type="match status" value="1"/>
</dbReference>
<dbReference type="PANTHER" id="PTHR32309:SF29">
    <property type="entry name" value="CHAIN LENGTH DETERMINANT PROTEIN"/>
    <property type="match status" value="1"/>
</dbReference>
<dbReference type="PANTHER" id="PTHR32309">
    <property type="entry name" value="TYROSINE-PROTEIN KINASE"/>
    <property type="match status" value="1"/>
</dbReference>
<dbReference type="Pfam" id="PF02706">
    <property type="entry name" value="Wzz"/>
    <property type="match status" value="1"/>
</dbReference>
<dbReference type="SUPFAM" id="SSF160355">
    <property type="entry name" value="Bacterial polysaccharide co-polymerase-like"/>
    <property type="match status" value="1"/>
</dbReference>
<protein>
    <recommendedName>
        <fullName>Chain length determinant protein</fullName>
    </recommendedName>
    <alternativeName>
        <fullName>Polysaccharide antigen chain regulator</fullName>
    </alternativeName>
</protein>